<accession>Q5NQ57</accession>
<proteinExistence type="inferred from homology"/>
<evidence type="ECO:0000255" key="1">
    <source>
        <dbReference type="HAMAP-Rule" id="MF_00374"/>
    </source>
</evidence>
<evidence type="ECO:0000305" key="2"/>
<dbReference type="EMBL" id="AE008692">
    <property type="protein sequence ID" value="AAV89148.1"/>
    <property type="molecule type" value="Genomic_DNA"/>
</dbReference>
<dbReference type="RefSeq" id="WP_011240431.1">
    <property type="nucleotide sequence ID" value="NZ_CP035711.1"/>
</dbReference>
<dbReference type="SMR" id="Q5NQ57"/>
<dbReference type="STRING" id="264203.ZMO0524"/>
<dbReference type="GeneID" id="79904284"/>
<dbReference type="KEGG" id="zmo:ZMO0524"/>
<dbReference type="eggNOG" id="COG0255">
    <property type="taxonomic scope" value="Bacteria"/>
</dbReference>
<dbReference type="HOGENOM" id="CLU_158491_1_0_5"/>
<dbReference type="Proteomes" id="UP000001173">
    <property type="component" value="Chromosome"/>
</dbReference>
<dbReference type="GO" id="GO:0022625">
    <property type="term" value="C:cytosolic large ribosomal subunit"/>
    <property type="evidence" value="ECO:0007669"/>
    <property type="project" value="TreeGrafter"/>
</dbReference>
<dbReference type="GO" id="GO:0003735">
    <property type="term" value="F:structural constituent of ribosome"/>
    <property type="evidence" value="ECO:0007669"/>
    <property type="project" value="InterPro"/>
</dbReference>
<dbReference type="GO" id="GO:0006412">
    <property type="term" value="P:translation"/>
    <property type="evidence" value="ECO:0007669"/>
    <property type="project" value="UniProtKB-UniRule"/>
</dbReference>
<dbReference type="CDD" id="cd00427">
    <property type="entry name" value="Ribosomal_L29_HIP"/>
    <property type="match status" value="1"/>
</dbReference>
<dbReference type="FunFam" id="1.10.287.310:FF:000001">
    <property type="entry name" value="50S ribosomal protein L29"/>
    <property type="match status" value="1"/>
</dbReference>
<dbReference type="Gene3D" id="1.10.287.310">
    <property type="match status" value="1"/>
</dbReference>
<dbReference type="HAMAP" id="MF_00374">
    <property type="entry name" value="Ribosomal_uL29"/>
    <property type="match status" value="1"/>
</dbReference>
<dbReference type="InterPro" id="IPR050063">
    <property type="entry name" value="Ribosomal_protein_uL29"/>
</dbReference>
<dbReference type="InterPro" id="IPR001854">
    <property type="entry name" value="Ribosomal_uL29"/>
</dbReference>
<dbReference type="InterPro" id="IPR018254">
    <property type="entry name" value="Ribosomal_uL29_CS"/>
</dbReference>
<dbReference type="InterPro" id="IPR036049">
    <property type="entry name" value="Ribosomal_uL29_sf"/>
</dbReference>
<dbReference type="NCBIfam" id="TIGR00012">
    <property type="entry name" value="L29"/>
    <property type="match status" value="1"/>
</dbReference>
<dbReference type="PANTHER" id="PTHR10916">
    <property type="entry name" value="60S RIBOSOMAL PROTEIN L35/50S RIBOSOMAL PROTEIN L29"/>
    <property type="match status" value="1"/>
</dbReference>
<dbReference type="PANTHER" id="PTHR10916:SF0">
    <property type="entry name" value="LARGE RIBOSOMAL SUBUNIT PROTEIN UL29C"/>
    <property type="match status" value="1"/>
</dbReference>
<dbReference type="Pfam" id="PF00831">
    <property type="entry name" value="Ribosomal_L29"/>
    <property type="match status" value="1"/>
</dbReference>
<dbReference type="SUPFAM" id="SSF46561">
    <property type="entry name" value="Ribosomal protein L29 (L29p)"/>
    <property type="match status" value="1"/>
</dbReference>
<dbReference type="PROSITE" id="PS00579">
    <property type="entry name" value="RIBOSOMAL_L29"/>
    <property type="match status" value="1"/>
</dbReference>
<reference key="1">
    <citation type="journal article" date="2005" name="Nat. Biotechnol.">
        <title>The genome sequence of the ethanologenic bacterium Zymomonas mobilis ZM4.</title>
        <authorList>
            <person name="Seo J.-S."/>
            <person name="Chong H."/>
            <person name="Park H.S."/>
            <person name="Yoon K.-O."/>
            <person name="Jung C."/>
            <person name="Kim J.J."/>
            <person name="Hong J.H."/>
            <person name="Kim H."/>
            <person name="Kim J.-H."/>
            <person name="Kil J.-I."/>
            <person name="Park C.J."/>
            <person name="Oh H.-M."/>
            <person name="Lee J.-S."/>
            <person name="Jin S.-J."/>
            <person name="Um H.-W."/>
            <person name="Lee H.-J."/>
            <person name="Oh S.-J."/>
            <person name="Kim J.Y."/>
            <person name="Kang H.L."/>
            <person name="Lee S.Y."/>
            <person name="Lee K.J."/>
            <person name="Kang H.S."/>
        </authorList>
    </citation>
    <scope>NUCLEOTIDE SEQUENCE [LARGE SCALE GENOMIC DNA]</scope>
    <source>
        <strain>ATCC 31821 / ZM4 / CP4</strain>
    </source>
</reference>
<feature type="chain" id="PRO_0000130505" description="Large ribosomal subunit protein uL29">
    <location>
        <begin position="1"/>
        <end position="67"/>
    </location>
</feature>
<organism>
    <name type="scientific">Zymomonas mobilis subsp. mobilis (strain ATCC 31821 / ZM4 / CP4)</name>
    <dbReference type="NCBI Taxonomy" id="264203"/>
    <lineage>
        <taxon>Bacteria</taxon>
        <taxon>Pseudomonadati</taxon>
        <taxon>Pseudomonadota</taxon>
        <taxon>Alphaproteobacteria</taxon>
        <taxon>Sphingomonadales</taxon>
        <taxon>Zymomonadaceae</taxon>
        <taxon>Zymomonas</taxon>
    </lineage>
</organism>
<gene>
    <name evidence="1" type="primary">rpmC</name>
    <name type="ordered locus">ZMO0524</name>
</gene>
<name>RL29_ZYMMO</name>
<sequence length="67" mass="7729">MAKIDDLKAKSDDQLAVELGEMKREQFNLRFQSATGQLEKPARVREVRRTIAQIKTLQAERQRSATK</sequence>
<protein>
    <recommendedName>
        <fullName evidence="1">Large ribosomal subunit protein uL29</fullName>
    </recommendedName>
    <alternativeName>
        <fullName evidence="2">50S ribosomal protein L29</fullName>
    </alternativeName>
</protein>
<comment type="similarity">
    <text evidence="1">Belongs to the universal ribosomal protein uL29 family.</text>
</comment>
<keyword id="KW-1185">Reference proteome</keyword>
<keyword id="KW-0687">Ribonucleoprotein</keyword>
<keyword id="KW-0689">Ribosomal protein</keyword>